<organism>
    <name type="scientific">Methanocaldococcus jannaschii (strain ATCC 43067 / DSM 2661 / JAL-1 / JCM 10045 / NBRC 100440)</name>
    <name type="common">Methanococcus jannaschii</name>
    <dbReference type="NCBI Taxonomy" id="243232"/>
    <lineage>
        <taxon>Archaea</taxon>
        <taxon>Methanobacteriati</taxon>
        <taxon>Methanobacteriota</taxon>
        <taxon>Methanomada group</taxon>
        <taxon>Methanococci</taxon>
        <taxon>Methanococcales</taxon>
        <taxon>Methanocaldococcaceae</taxon>
        <taxon>Methanocaldococcus</taxon>
    </lineage>
</organism>
<gene>
    <name type="primary">rio2</name>
    <name type="ordered locus">MJ1073</name>
</gene>
<feature type="chain" id="PRO_0000213535" description="RIO-type serine/threonine-protein kinase Rio2">
    <location>
        <begin position="1"/>
        <end position="270"/>
    </location>
</feature>
<feature type="domain" description="Protein kinase" evidence="2">
    <location>
        <begin position="65"/>
        <end position="270"/>
    </location>
</feature>
<feature type="active site" description="Proton acceptor" evidence="2">
    <location>
        <position position="202"/>
    </location>
</feature>
<feature type="binding site" evidence="2">
    <location>
        <begin position="72"/>
        <end position="77"/>
    </location>
    <ligand>
        <name>ATP</name>
        <dbReference type="ChEBI" id="CHEBI:30616"/>
    </ligand>
</feature>
<feature type="binding site" evidence="1">
    <location>
        <position position="76"/>
    </location>
    <ligand>
        <name>Mg(2+)</name>
        <dbReference type="ChEBI" id="CHEBI:18420"/>
        <label>1</label>
    </ligand>
</feature>
<feature type="binding site" evidence="2">
    <location>
        <position position="93"/>
    </location>
    <ligand>
        <name>ATP</name>
        <dbReference type="ChEBI" id="CHEBI:30616"/>
    </ligand>
</feature>
<feature type="binding site" evidence="2">
    <location>
        <begin position="158"/>
        <end position="164"/>
    </location>
    <ligand>
        <name>ATP</name>
        <dbReference type="ChEBI" id="CHEBI:30616"/>
    </ligand>
</feature>
<feature type="binding site" evidence="2">
    <location>
        <begin position="206"/>
        <end position="207"/>
    </location>
    <ligand>
        <name>ATP</name>
        <dbReference type="ChEBI" id="CHEBI:30616"/>
    </ligand>
</feature>
<feature type="binding site" evidence="1">
    <location>
        <position position="207"/>
    </location>
    <ligand>
        <name>Mg(2+)</name>
        <dbReference type="ChEBI" id="CHEBI:18420"/>
        <label>2</label>
    </ligand>
</feature>
<feature type="binding site" evidence="2">
    <location>
        <position position="220"/>
    </location>
    <ligand>
        <name>ATP</name>
        <dbReference type="ChEBI" id="CHEBI:30616"/>
    </ligand>
</feature>
<feature type="binding site" evidence="1">
    <location>
        <position position="220"/>
    </location>
    <ligand>
        <name>Mg(2+)</name>
        <dbReference type="ChEBI" id="CHEBI:18420"/>
        <label>1</label>
    </ligand>
</feature>
<feature type="binding site" evidence="1">
    <location>
        <position position="220"/>
    </location>
    <ligand>
        <name>Mg(2+)</name>
        <dbReference type="ChEBI" id="CHEBI:18420"/>
        <label>2</label>
    </ligand>
</feature>
<dbReference type="EC" id="2.7.11.1"/>
<dbReference type="EMBL" id="L77117">
    <property type="protein sequence ID" value="AAB99073.1"/>
    <property type="molecule type" value="Genomic_DNA"/>
</dbReference>
<dbReference type="PIR" id="H64433">
    <property type="entry name" value="H64433"/>
</dbReference>
<dbReference type="SMR" id="Q58473"/>
<dbReference type="FunCoup" id="Q58473">
    <property type="interactions" value="116"/>
</dbReference>
<dbReference type="STRING" id="243232.MJ_1073"/>
<dbReference type="PaxDb" id="243232-MJ_1073"/>
<dbReference type="EnsemblBacteria" id="AAB99073">
    <property type="protein sequence ID" value="AAB99073"/>
    <property type="gene ID" value="MJ_1073"/>
</dbReference>
<dbReference type="KEGG" id="mja:MJ_1073"/>
<dbReference type="eggNOG" id="arCOG01181">
    <property type="taxonomic scope" value="Archaea"/>
</dbReference>
<dbReference type="HOGENOM" id="CLU_018693_1_0_2"/>
<dbReference type="InParanoid" id="Q58473"/>
<dbReference type="PhylomeDB" id="Q58473"/>
<dbReference type="Proteomes" id="UP000000805">
    <property type="component" value="Chromosome"/>
</dbReference>
<dbReference type="GO" id="GO:0005829">
    <property type="term" value="C:cytosol"/>
    <property type="evidence" value="ECO:0000318"/>
    <property type="project" value="GO_Central"/>
</dbReference>
<dbReference type="GO" id="GO:0030688">
    <property type="term" value="C:preribosome, small subunit precursor"/>
    <property type="evidence" value="ECO:0000318"/>
    <property type="project" value="GO_Central"/>
</dbReference>
<dbReference type="GO" id="GO:0005524">
    <property type="term" value="F:ATP binding"/>
    <property type="evidence" value="ECO:0007669"/>
    <property type="project" value="UniProtKB-KW"/>
</dbReference>
<dbReference type="GO" id="GO:0046872">
    <property type="term" value="F:metal ion binding"/>
    <property type="evidence" value="ECO:0007669"/>
    <property type="project" value="UniProtKB-KW"/>
</dbReference>
<dbReference type="GO" id="GO:0004672">
    <property type="term" value="F:protein kinase activity"/>
    <property type="evidence" value="ECO:0000318"/>
    <property type="project" value="GO_Central"/>
</dbReference>
<dbReference type="GO" id="GO:0106310">
    <property type="term" value="F:protein serine kinase activity"/>
    <property type="evidence" value="ECO:0007669"/>
    <property type="project" value="RHEA"/>
</dbReference>
<dbReference type="GO" id="GO:0004674">
    <property type="term" value="F:protein serine/threonine kinase activity"/>
    <property type="evidence" value="ECO:0007669"/>
    <property type="project" value="UniProtKB-KW"/>
</dbReference>
<dbReference type="GO" id="GO:0030490">
    <property type="term" value="P:maturation of SSU-rRNA"/>
    <property type="evidence" value="ECO:0000318"/>
    <property type="project" value="GO_Central"/>
</dbReference>
<dbReference type="CDD" id="cd05144">
    <property type="entry name" value="RIO2_C"/>
    <property type="match status" value="1"/>
</dbReference>
<dbReference type="FunFam" id="1.10.510.10:FF:001928">
    <property type="entry name" value="RIO-type serine/threonine-protein kinase Rio2"/>
    <property type="match status" value="1"/>
</dbReference>
<dbReference type="FunFam" id="3.30.200.20:FF:000052">
    <property type="entry name" value="Serine/threonine-protein kinase RIO2"/>
    <property type="match status" value="1"/>
</dbReference>
<dbReference type="Gene3D" id="3.30.200.20">
    <property type="entry name" value="Phosphorylase Kinase, domain 1"/>
    <property type="match status" value="1"/>
</dbReference>
<dbReference type="Gene3D" id="1.10.510.10">
    <property type="entry name" value="Transferase(Phosphotransferase) domain 1"/>
    <property type="match status" value="1"/>
</dbReference>
<dbReference type="Gene3D" id="1.10.10.10">
    <property type="entry name" value="Winged helix-like DNA-binding domain superfamily/Winged helix DNA-binding domain"/>
    <property type="match status" value="1"/>
</dbReference>
<dbReference type="InterPro" id="IPR011009">
    <property type="entry name" value="Kinase-like_dom_sf"/>
</dbReference>
<dbReference type="InterPro" id="IPR000719">
    <property type="entry name" value="Prot_kinase_dom"/>
</dbReference>
<dbReference type="InterPro" id="IPR030484">
    <property type="entry name" value="Rio2"/>
</dbReference>
<dbReference type="InterPro" id="IPR015285">
    <property type="entry name" value="RIO2_wHTH_N"/>
</dbReference>
<dbReference type="InterPro" id="IPR018934">
    <property type="entry name" value="RIO_dom"/>
</dbReference>
<dbReference type="InterPro" id="IPR000687">
    <property type="entry name" value="RIO_kinase"/>
</dbReference>
<dbReference type="InterPro" id="IPR018935">
    <property type="entry name" value="RIO_kinase_CS"/>
</dbReference>
<dbReference type="InterPro" id="IPR036388">
    <property type="entry name" value="WH-like_DNA-bd_sf"/>
</dbReference>
<dbReference type="InterPro" id="IPR036390">
    <property type="entry name" value="WH_DNA-bd_sf"/>
</dbReference>
<dbReference type="PANTHER" id="PTHR45852">
    <property type="entry name" value="SER/THR-PROTEIN KINASE RIO2"/>
    <property type="match status" value="1"/>
</dbReference>
<dbReference type="PANTHER" id="PTHR45852:SF1">
    <property type="entry name" value="SERINE_THREONINE-PROTEIN KINASE RIO2"/>
    <property type="match status" value="1"/>
</dbReference>
<dbReference type="Pfam" id="PF01163">
    <property type="entry name" value="RIO1"/>
    <property type="match status" value="1"/>
</dbReference>
<dbReference type="Pfam" id="PF09202">
    <property type="entry name" value="Rio2_N"/>
    <property type="match status" value="1"/>
</dbReference>
<dbReference type="SMART" id="SM00090">
    <property type="entry name" value="RIO"/>
    <property type="match status" value="1"/>
</dbReference>
<dbReference type="SUPFAM" id="SSF56112">
    <property type="entry name" value="Protein kinase-like (PK-like)"/>
    <property type="match status" value="1"/>
</dbReference>
<dbReference type="SUPFAM" id="SSF46785">
    <property type="entry name" value="Winged helix' DNA-binding domain"/>
    <property type="match status" value="1"/>
</dbReference>
<dbReference type="PROSITE" id="PS50011">
    <property type="entry name" value="PROTEIN_KINASE_DOM"/>
    <property type="match status" value="1"/>
</dbReference>
<dbReference type="PROSITE" id="PS01245">
    <property type="entry name" value="RIO1"/>
    <property type="match status" value="1"/>
</dbReference>
<name>RIO2_METJA</name>
<proteinExistence type="inferred from homology"/>
<reference key="1">
    <citation type="journal article" date="1996" name="Science">
        <title>Complete genome sequence of the methanogenic archaeon, Methanococcus jannaschii.</title>
        <authorList>
            <person name="Bult C.J."/>
            <person name="White O."/>
            <person name="Olsen G.J."/>
            <person name="Zhou L."/>
            <person name="Fleischmann R.D."/>
            <person name="Sutton G.G."/>
            <person name="Blake J.A."/>
            <person name="FitzGerald L.M."/>
            <person name="Clayton R.A."/>
            <person name="Gocayne J.D."/>
            <person name="Kerlavage A.R."/>
            <person name="Dougherty B.A."/>
            <person name="Tomb J.-F."/>
            <person name="Adams M.D."/>
            <person name="Reich C.I."/>
            <person name="Overbeek R."/>
            <person name="Kirkness E.F."/>
            <person name="Weinstock K.G."/>
            <person name="Merrick J.M."/>
            <person name="Glodek A."/>
            <person name="Scott J.L."/>
            <person name="Geoghagen N.S.M."/>
            <person name="Weidman J.F."/>
            <person name="Fuhrmann J.L."/>
            <person name="Nguyen D."/>
            <person name="Utterback T.R."/>
            <person name="Kelley J.M."/>
            <person name="Peterson J.D."/>
            <person name="Sadow P.W."/>
            <person name="Hanna M.C."/>
            <person name="Cotton M.D."/>
            <person name="Roberts K.M."/>
            <person name="Hurst M.A."/>
            <person name="Kaine B.P."/>
            <person name="Borodovsky M."/>
            <person name="Klenk H.-P."/>
            <person name="Fraser C.M."/>
            <person name="Smith H.O."/>
            <person name="Woese C.R."/>
            <person name="Venter J.C."/>
        </authorList>
    </citation>
    <scope>NUCLEOTIDE SEQUENCE [LARGE SCALE GENOMIC DNA]</scope>
    <source>
        <strain>ATCC 43067 / DSM 2661 / JAL-1 / JCM 10045 / NBRC 100440</strain>
    </source>
</reference>
<keyword id="KW-0067">ATP-binding</keyword>
<keyword id="KW-0418">Kinase</keyword>
<keyword id="KW-0460">Magnesium</keyword>
<keyword id="KW-0479">Metal-binding</keyword>
<keyword id="KW-0547">Nucleotide-binding</keyword>
<keyword id="KW-1185">Reference proteome</keyword>
<keyword id="KW-0723">Serine/threonine-protein kinase</keyword>
<keyword id="KW-0808">Transferase</keyword>
<comment type="catalytic activity">
    <reaction>
        <text>L-seryl-[protein] + ATP = O-phospho-L-seryl-[protein] + ADP + H(+)</text>
        <dbReference type="Rhea" id="RHEA:17989"/>
        <dbReference type="Rhea" id="RHEA-COMP:9863"/>
        <dbReference type="Rhea" id="RHEA-COMP:11604"/>
        <dbReference type="ChEBI" id="CHEBI:15378"/>
        <dbReference type="ChEBI" id="CHEBI:29999"/>
        <dbReference type="ChEBI" id="CHEBI:30616"/>
        <dbReference type="ChEBI" id="CHEBI:83421"/>
        <dbReference type="ChEBI" id="CHEBI:456216"/>
        <dbReference type="EC" id="2.7.11.1"/>
    </reaction>
</comment>
<comment type="catalytic activity">
    <reaction>
        <text>L-threonyl-[protein] + ATP = O-phospho-L-threonyl-[protein] + ADP + H(+)</text>
        <dbReference type="Rhea" id="RHEA:46608"/>
        <dbReference type="Rhea" id="RHEA-COMP:11060"/>
        <dbReference type="Rhea" id="RHEA-COMP:11605"/>
        <dbReference type="ChEBI" id="CHEBI:15378"/>
        <dbReference type="ChEBI" id="CHEBI:30013"/>
        <dbReference type="ChEBI" id="CHEBI:30616"/>
        <dbReference type="ChEBI" id="CHEBI:61977"/>
        <dbReference type="ChEBI" id="CHEBI:456216"/>
        <dbReference type="EC" id="2.7.11.1"/>
    </reaction>
</comment>
<comment type="cofactor">
    <cofactor evidence="1">
        <name>Mg(2+)</name>
        <dbReference type="ChEBI" id="CHEBI:18420"/>
    </cofactor>
</comment>
<comment type="subunit">
    <text evidence="1">Monomer.</text>
</comment>
<comment type="similarity">
    <text evidence="3">Belongs to the protein kinase superfamily. RIO-type Ser/Thr kinase family.</text>
</comment>
<accession>Q58473</accession>
<evidence type="ECO:0000250" key="1"/>
<evidence type="ECO:0000255" key="2">
    <source>
        <dbReference type="PROSITE-ProRule" id="PRU00159"/>
    </source>
</evidence>
<evidence type="ECO:0000305" key="3"/>
<sequence length="270" mass="31881">MRHHEWVPLDEIVRKAKMPEKDVLYRLKRLNKFGFVVRSTYGYAVSMGGYDALAINAFVKKGILKAIGNKLGVGKEGDVYTVLLSDGREAVLKFHKHGRTCFTRGKRYRGYLADKHHISWLYVSRLTAEREFEILNELFPIVKVPEPIEWNRHAIIMGKVVGEELKRLDLSEFMSKEEIKDLFWKIIEEVKKAYEIGYIHGDLSEFNILLDENGDFVIIDWPQAVPKYHPDAEFYLKRDIWNVIRYFKKYKIDKEDEKIDVDKIFEYITK</sequence>
<protein>
    <recommendedName>
        <fullName>RIO-type serine/threonine-protein kinase Rio2</fullName>
        <ecNumber>2.7.11.1</ecNumber>
    </recommendedName>
</protein>